<organism>
    <name type="scientific">Acidithiobacillus ferrooxidans (strain ATCC 23270 / DSM 14882 / CIP 104768 / NCIMB 8455)</name>
    <name type="common">Ferrobacillus ferrooxidans (strain ATCC 23270)</name>
    <dbReference type="NCBI Taxonomy" id="243159"/>
    <lineage>
        <taxon>Bacteria</taxon>
        <taxon>Pseudomonadati</taxon>
        <taxon>Pseudomonadota</taxon>
        <taxon>Acidithiobacillia</taxon>
        <taxon>Acidithiobacillales</taxon>
        <taxon>Acidithiobacillaceae</taxon>
        <taxon>Acidithiobacillus</taxon>
    </lineage>
</organism>
<sequence length="644" mass="72564">MPDIQLPDGSHRQFAEPVTGLTLARAIGSGLARAAVAMRVDGILKDLSAVLDQDAEVAIVTRDSADGLEVIRHSTAHLLAQAVQSLYPEAQVTIGPVIDNGFYYDFAFPRGFTPEDLEAIEARMHALVKENLPVQREMLSREDAIALFEKMGEDYKVEIIRAIPRGEPLSLYRQGDFVDLCRGPHVPSTGVLGAFKLQRVAGAYWRGDSRNPMLQRIYGTAWAQQKDLDAYLQQLAEAEKRDHRRIGTELELFSIQEDAGGGLVFWHPMGSRVRRVIEDFWKEAHVEAGYDLLYTPHIAHEQLWYTSGHKDFYSESMFDPMQDEGQAYQLKPMNCPFHILIYKDKLHSYRDLPIRWAELGTVYRHEMSGALHGLMRVRGFTQDDAHVFCRPDQIEAEIGAVLVLVRKILGTFGFDQYEINLSTRPGHSVGSDEIWDAATQALRNALERAGLEYQVDAGGGAFYGPKIDLKIQDAIGRKWQCSTVQLDFNLPERFAMEYVAEDGARKVPIMVHRAIFGSIERFFGVLIEHYEGKFPVWLAPVQAVVLPISEHYSEYAESVSDVLVKRGIRAETDLRNEKIGYKIRAHTLRRVPYLLVVGEREKEAGTVAVRDRNGQDLGTLSIDAVGATLQKMDQARVNTLEWQG</sequence>
<dbReference type="EC" id="6.1.1.3" evidence="1"/>
<dbReference type="EMBL" id="CP001219">
    <property type="protein sequence ID" value="ACK78833.1"/>
    <property type="molecule type" value="Genomic_DNA"/>
</dbReference>
<dbReference type="RefSeq" id="WP_012537294.1">
    <property type="nucleotide sequence ID" value="NC_011761.1"/>
</dbReference>
<dbReference type="SMR" id="B7J7T0"/>
<dbReference type="STRING" id="243159.AFE_2614"/>
<dbReference type="PaxDb" id="243159-AFE_2614"/>
<dbReference type="GeneID" id="65281664"/>
<dbReference type="KEGG" id="afr:AFE_2614"/>
<dbReference type="eggNOG" id="COG0441">
    <property type="taxonomic scope" value="Bacteria"/>
</dbReference>
<dbReference type="HOGENOM" id="CLU_008554_0_1_6"/>
<dbReference type="Proteomes" id="UP000001362">
    <property type="component" value="Chromosome"/>
</dbReference>
<dbReference type="GO" id="GO:0005737">
    <property type="term" value="C:cytoplasm"/>
    <property type="evidence" value="ECO:0007669"/>
    <property type="project" value="UniProtKB-SubCell"/>
</dbReference>
<dbReference type="GO" id="GO:0005524">
    <property type="term" value="F:ATP binding"/>
    <property type="evidence" value="ECO:0007669"/>
    <property type="project" value="UniProtKB-UniRule"/>
</dbReference>
<dbReference type="GO" id="GO:0046872">
    <property type="term" value="F:metal ion binding"/>
    <property type="evidence" value="ECO:0007669"/>
    <property type="project" value="UniProtKB-KW"/>
</dbReference>
<dbReference type="GO" id="GO:0004829">
    <property type="term" value="F:threonine-tRNA ligase activity"/>
    <property type="evidence" value="ECO:0007669"/>
    <property type="project" value="UniProtKB-UniRule"/>
</dbReference>
<dbReference type="GO" id="GO:0000049">
    <property type="term" value="F:tRNA binding"/>
    <property type="evidence" value="ECO:0007669"/>
    <property type="project" value="UniProtKB-KW"/>
</dbReference>
<dbReference type="GO" id="GO:0006435">
    <property type="term" value="P:threonyl-tRNA aminoacylation"/>
    <property type="evidence" value="ECO:0007669"/>
    <property type="project" value="UniProtKB-UniRule"/>
</dbReference>
<dbReference type="CDD" id="cd01667">
    <property type="entry name" value="TGS_ThrRS"/>
    <property type="match status" value="1"/>
</dbReference>
<dbReference type="CDD" id="cd00860">
    <property type="entry name" value="ThrRS_anticodon"/>
    <property type="match status" value="1"/>
</dbReference>
<dbReference type="CDD" id="cd00771">
    <property type="entry name" value="ThrRS_core"/>
    <property type="match status" value="1"/>
</dbReference>
<dbReference type="FunFam" id="3.10.20.30:FF:000005">
    <property type="entry name" value="Threonine--tRNA ligase"/>
    <property type="match status" value="1"/>
</dbReference>
<dbReference type="FunFam" id="3.30.54.20:FF:000002">
    <property type="entry name" value="Threonine--tRNA ligase"/>
    <property type="match status" value="1"/>
</dbReference>
<dbReference type="FunFam" id="3.30.930.10:FF:000002">
    <property type="entry name" value="Threonine--tRNA ligase"/>
    <property type="match status" value="1"/>
</dbReference>
<dbReference type="FunFam" id="3.40.50.800:FF:000001">
    <property type="entry name" value="Threonine--tRNA ligase"/>
    <property type="match status" value="1"/>
</dbReference>
<dbReference type="FunFam" id="3.30.980.10:FF:000005">
    <property type="entry name" value="Threonyl-tRNA synthetase, mitochondrial"/>
    <property type="match status" value="1"/>
</dbReference>
<dbReference type="Gene3D" id="3.10.20.30">
    <property type="match status" value="1"/>
</dbReference>
<dbReference type="Gene3D" id="3.30.54.20">
    <property type="match status" value="1"/>
</dbReference>
<dbReference type="Gene3D" id="3.40.50.800">
    <property type="entry name" value="Anticodon-binding domain"/>
    <property type="match status" value="1"/>
</dbReference>
<dbReference type="Gene3D" id="3.30.930.10">
    <property type="entry name" value="Bira Bifunctional Protein, Domain 2"/>
    <property type="match status" value="1"/>
</dbReference>
<dbReference type="Gene3D" id="3.30.980.10">
    <property type="entry name" value="Threonyl-trna Synthetase, Chain A, domain 2"/>
    <property type="match status" value="1"/>
</dbReference>
<dbReference type="HAMAP" id="MF_00184">
    <property type="entry name" value="Thr_tRNA_synth"/>
    <property type="match status" value="1"/>
</dbReference>
<dbReference type="InterPro" id="IPR002314">
    <property type="entry name" value="aa-tRNA-synt_IIb"/>
</dbReference>
<dbReference type="InterPro" id="IPR006195">
    <property type="entry name" value="aa-tRNA-synth_II"/>
</dbReference>
<dbReference type="InterPro" id="IPR045864">
    <property type="entry name" value="aa-tRNA-synth_II/BPL/LPL"/>
</dbReference>
<dbReference type="InterPro" id="IPR004154">
    <property type="entry name" value="Anticodon-bd"/>
</dbReference>
<dbReference type="InterPro" id="IPR036621">
    <property type="entry name" value="Anticodon-bd_dom_sf"/>
</dbReference>
<dbReference type="InterPro" id="IPR012675">
    <property type="entry name" value="Beta-grasp_dom_sf"/>
</dbReference>
<dbReference type="InterPro" id="IPR004095">
    <property type="entry name" value="TGS"/>
</dbReference>
<dbReference type="InterPro" id="IPR012676">
    <property type="entry name" value="TGS-like"/>
</dbReference>
<dbReference type="InterPro" id="IPR002320">
    <property type="entry name" value="Thr-tRNA-ligase_IIa"/>
</dbReference>
<dbReference type="InterPro" id="IPR018163">
    <property type="entry name" value="Thr/Ala-tRNA-synth_IIc_edit"/>
</dbReference>
<dbReference type="InterPro" id="IPR047246">
    <property type="entry name" value="ThrRS_anticodon"/>
</dbReference>
<dbReference type="InterPro" id="IPR033728">
    <property type="entry name" value="ThrRS_core"/>
</dbReference>
<dbReference type="InterPro" id="IPR012947">
    <property type="entry name" value="tRNA_SAD"/>
</dbReference>
<dbReference type="NCBIfam" id="TIGR00418">
    <property type="entry name" value="thrS"/>
    <property type="match status" value="1"/>
</dbReference>
<dbReference type="PANTHER" id="PTHR11451:SF44">
    <property type="entry name" value="THREONINE--TRNA LIGASE, CHLOROPLASTIC_MITOCHONDRIAL 2"/>
    <property type="match status" value="1"/>
</dbReference>
<dbReference type="PANTHER" id="PTHR11451">
    <property type="entry name" value="THREONINE-TRNA LIGASE"/>
    <property type="match status" value="1"/>
</dbReference>
<dbReference type="Pfam" id="PF03129">
    <property type="entry name" value="HGTP_anticodon"/>
    <property type="match status" value="1"/>
</dbReference>
<dbReference type="Pfam" id="PF02824">
    <property type="entry name" value="TGS"/>
    <property type="match status" value="1"/>
</dbReference>
<dbReference type="Pfam" id="PF00587">
    <property type="entry name" value="tRNA-synt_2b"/>
    <property type="match status" value="1"/>
</dbReference>
<dbReference type="Pfam" id="PF07973">
    <property type="entry name" value="tRNA_SAD"/>
    <property type="match status" value="1"/>
</dbReference>
<dbReference type="PRINTS" id="PR01047">
    <property type="entry name" value="TRNASYNTHTHR"/>
</dbReference>
<dbReference type="SMART" id="SM00863">
    <property type="entry name" value="tRNA_SAD"/>
    <property type="match status" value="1"/>
</dbReference>
<dbReference type="SUPFAM" id="SSF52954">
    <property type="entry name" value="Class II aaRS ABD-related"/>
    <property type="match status" value="1"/>
</dbReference>
<dbReference type="SUPFAM" id="SSF55681">
    <property type="entry name" value="Class II aaRS and biotin synthetases"/>
    <property type="match status" value="1"/>
</dbReference>
<dbReference type="SUPFAM" id="SSF81271">
    <property type="entry name" value="TGS-like"/>
    <property type="match status" value="1"/>
</dbReference>
<dbReference type="SUPFAM" id="SSF55186">
    <property type="entry name" value="ThrRS/AlaRS common domain"/>
    <property type="match status" value="1"/>
</dbReference>
<dbReference type="PROSITE" id="PS50862">
    <property type="entry name" value="AA_TRNA_LIGASE_II"/>
    <property type="match status" value="1"/>
</dbReference>
<dbReference type="PROSITE" id="PS51880">
    <property type="entry name" value="TGS"/>
    <property type="match status" value="1"/>
</dbReference>
<evidence type="ECO:0000255" key="1">
    <source>
        <dbReference type="HAMAP-Rule" id="MF_00184"/>
    </source>
</evidence>
<evidence type="ECO:0000255" key="2">
    <source>
        <dbReference type="PROSITE-ProRule" id="PRU01228"/>
    </source>
</evidence>
<comment type="function">
    <text evidence="1">Catalyzes the attachment of threonine to tRNA(Thr) in a two-step reaction: L-threonine is first activated by ATP to form Thr-AMP and then transferred to the acceptor end of tRNA(Thr). Also edits incorrectly charged L-seryl-tRNA(Thr).</text>
</comment>
<comment type="catalytic activity">
    <reaction evidence="1">
        <text>tRNA(Thr) + L-threonine + ATP = L-threonyl-tRNA(Thr) + AMP + diphosphate + H(+)</text>
        <dbReference type="Rhea" id="RHEA:24624"/>
        <dbReference type="Rhea" id="RHEA-COMP:9670"/>
        <dbReference type="Rhea" id="RHEA-COMP:9704"/>
        <dbReference type="ChEBI" id="CHEBI:15378"/>
        <dbReference type="ChEBI" id="CHEBI:30616"/>
        <dbReference type="ChEBI" id="CHEBI:33019"/>
        <dbReference type="ChEBI" id="CHEBI:57926"/>
        <dbReference type="ChEBI" id="CHEBI:78442"/>
        <dbReference type="ChEBI" id="CHEBI:78534"/>
        <dbReference type="ChEBI" id="CHEBI:456215"/>
        <dbReference type="EC" id="6.1.1.3"/>
    </reaction>
</comment>
<comment type="cofactor">
    <cofactor evidence="1">
        <name>Zn(2+)</name>
        <dbReference type="ChEBI" id="CHEBI:29105"/>
    </cofactor>
    <text evidence="1">Binds 1 zinc ion per subunit.</text>
</comment>
<comment type="subunit">
    <text evidence="1">Homodimer.</text>
</comment>
<comment type="subcellular location">
    <subcellularLocation>
        <location evidence="1">Cytoplasm</location>
    </subcellularLocation>
</comment>
<comment type="similarity">
    <text evidence="1">Belongs to the class-II aminoacyl-tRNA synthetase family.</text>
</comment>
<proteinExistence type="inferred from homology"/>
<accession>B7J7T0</accession>
<gene>
    <name evidence="1" type="primary">thrS</name>
    <name type="ordered locus">AFE_2614</name>
</gene>
<protein>
    <recommendedName>
        <fullName evidence="1">Threonine--tRNA ligase</fullName>
        <ecNumber evidence="1">6.1.1.3</ecNumber>
    </recommendedName>
    <alternativeName>
        <fullName evidence="1">Threonyl-tRNA synthetase</fullName>
        <shortName evidence="1">ThrRS</shortName>
    </alternativeName>
</protein>
<reference key="1">
    <citation type="journal article" date="2008" name="BMC Genomics">
        <title>Acidithiobacillus ferrooxidans metabolism: from genome sequence to industrial applications.</title>
        <authorList>
            <person name="Valdes J."/>
            <person name="Pedroso I."/>
            <person name="Quatrini R."/>
            <person name="Dodson R.J."/>
            <person name="Tettelin H."/>
            <person name="Blake R. II"/>
            <person name="Eisen J.A."/>
            <person name="Holmes D.S."/>
        </authorList>
    </citation>
    <scope>NUCLEOTIDE SEQUENCE [LARGE SCALE GENOMIC DNA]</scope>
    <source>
        <strain>ATCC 23270 / DSM 14882 / CIP 104768 / NCIMB 8455</strain>
    </source>
</reference>
<name>SYT_ACIF2</name>
<feature type="chain" id="PRO_1000203895" description="Threonine--tRNA ligase">
    <location>
        <begin position="1"/>
        <end position="644"/>
    </location>
</feature>
<feature type="domain" description="TGS" evidence="2">
    <location>
        <begin position="1"/>
        <end position="61"/>
    </location>
</feature>
<feature type="region of interest" description="Catalytic" evidence="1">
    <location>
        <begin position="242"/>
        <end position="535"/>
    </location>
</feature>
<feature type="binding site" evidence="1">
    <location>
        <position position="335"/>
    </location>
    <ligand>
        <name>Zn(2+)</name>
        <dbReference type="ChEBI" id="CHEBI:29105"/>
    </ligand>
</feature>
<feature type="binding site" evidence="1">
    <location>
        <position position="386"/>
    </location>
    <ligand>
        <name>Zn(2+)</name>
        <dbReference type="ChEBI" id="CHEBI:29105"/>
    </ligand>
</feature>
<feature type="binding site" evidence="1">
    <location>
        <position position="512"/>
    </location>
    <ligand>
        <name>Zn(2+)</name>
        <dbReference type="ChEBI" id="CHEBI:29105"/>
    </ligand>
</feature>
<keyword id="KW-0030">Aminoacyl-tRNA synthetase</keyword>
<keyword id="KW-0067">ATP-binding</keyword>
<keyword id="KW-0963">Cytoplasm</keyword>
<keyword id="KW-0436">Ligase</keyword>
<keyword id="KW-0479">Metal-binding</keyword>
<keyword id="KW-0547">Nucleotide-binding</keyword>
<keyword id="KW-0648">Protein biosynthesis</keyword>
<keyword id="KW-1185">Reference proteome</keyword>
<keyword id="KW-0694">RNA-binding</keyword>
<keyword id="KW-0820">tRNA-binding</keyword>
<keyword id="KW-0862">Zinc</keyword>